<feature type="signal peptide" evidence="1">
    <location>
        <begin position="1"/>
        <end position="21"/>
    </location>
</feature>
<feature type="chain" id="PRO_5002645759" description="ABC transporter nucleoside-binding protein BmpA" evidence="1">
    <location>
        <begin position="22"/>
        <end position="351"/>
    </location>
</feature>
<feature type="lipid moiety-binding region" description="N-palmitoyl cysteine" evidence="1">
    <location>
        <position position="22"/>
    </location>
</feature>
<feature type="lipid moiety-binding region" description="S-diacylglycerol cysteine" evidence="1">
    <location>
        <position position="22"/>
    </location>
</feature>
<evidence type="ECO:0000255" key="1">
    <source>
        <dbReference type="PROSITE-ProRule" id="PRU00303"/>
    </source>
</evidence>
<evidence type="ECO:0000269" key="2">
    <source>
    </source>
</evidence>
<evidence type="ECO:0000303" key="3">
    <source>
    </source>
</evidence>
<evidence type="ECO:0000305" key="4"/>
<evidence type="ECO:0000305" key="5">
    <source>
    </source>
</evidence>
<evidence type="ECO:0000312" key="6">
    <source>
        <dbReference type="EMBL" id="CAL97657.1"/>
    </source>
</evidence>
<protein>
    <recommendedName>
        <fullName evidence="4">ABC transporter nucleoside-binding protein BmpA</fullName>
    </recommendedName>
</protein>
<dbReference type="EMBL" id="AM406671">
    <property type="protein sequence ID" value="CAL97657.1"/>
    <property type="molecule type" value="Genomic_DNA"/>
</dbReference>
<dbReference type="RefSeq" id="WP_011834979.1">
    <property type="nucleotide sequence ID" value="NC_009004.1"/>
</dbReference>
<dbReference type="SMR" id="A2RK47"/>
<dbReference type="STRING" id="416870.llmg_1064"/>
<dbReference type="KEGG" id="llm:llmg_1064"/>
<dbReference type="eggNOG" id="COG1744">
    <property type="taxonomic scope" value="Bacteria"/>
</dbReference>
<dbReference type="HOGENOM" id="CLU_038813_0_0_9"/>
<dbReference type="OrthoDB" id="9784230at2"/>
<dbReference type="PhylomeDB" id="A2RK47"/>
<dbReference type="Proteomes" id="UP000000364">
    <property type="component" value="Chromosome"/>
</dbReference>
<dbReference type="GO" id="GO:0005886">
    <property type="term" value="C:plasma membrane"/>
    <property type="evidence" value="ECO:0007669"/>
    <property type="project" value="UniProtKB-SubCell"/>
</dbReference>
<dbReference type="CDD" id="cd06354">
    <property type="entry name" value="PBP1_PrnA-like"/>
    <property type="match status" value="1"/>
</dbReference>
<dbReference type="Gene3D" id="3.40.50.2300">
    <property type="match status" value="2"/>
</dbReference>
<dbReference type="InterPro" id="IPR050957">
    <property type="entry name" value="BMP_lipoprotein"/>
</dbReference>
<dbReference type="InterPro" id="IPR028082">
    <property type="entry name" value="Peripla_BP_I"/>
</dbReference>
<dbReference type="InterPro" id="IPR003760">
    <property type="entry name" value="PnrA-like"/>
</dbReference>
<dbReference type="PANTHER" id="PTHR34296:SF2">
    <property type="entry name" value="ABC TRANSPORTER GUANOSINE-BINDING PROTEIN NUPN"/>
    <property type="match status" value="1"/>
</dbReference>
<dbReference type="PANTHER" id="PTHR34296">
    <property type="entry name" value="TRANSCRIPTIONAL ACTIVATOR PROTEIN MED"/>
    <property type="match status" value="1"/>
</dbReference>
<dbReference type="Pfam" id="PF02608">
    <property type="entry name" value="Bmp"/>
    <property type="match status" value="1"/>
</dbReference>
<dbReference type="SUPFAM" id="SSF53822">
    <property type="entry name" value="Periplasmic binding protein-like I"/>
    <property type="match status" value="1"/>
</dbReference>
<dbReference type="PROSITE" id="PS51257">
    <property type="entry name" value="PROKAR_LIPOPROTEIN"/>
    <property type="match status" value="1"/>
</dbReference>
<accession>A2RK47</accession>
<organism>
    <name type="scientific">Lactococcus lactis subsp. cremoris (strain MG1363)</name>
    <dbReference type="NCBI Taxonomy" id="416870"/>
    <lineage>
        <taxon>Bacteria</taxon>
        <taxon>Bacillati</taxon>
        <taxon>Bacillota</taxon>
        <taxon>Bacilli</taxon>
        <taxon>Lactobacillales</taxon>
        <taxon>Streptococcaceae</taxon>
        <taxon>Lactococcus</taxon>
        <taxon>Lactococcus cremoris subsp. cremoris</taxon>
    </lineage>
</organism>
<proteinExistence type="evidence at protein level"/>
<name>BMPA_LACLM</name>
<sequence>MKKRVIAVSAIALASVAVLAGCRSHDASGTSGKVKTDLKAAIVTDANGVNDRSFNQSAWEGLQSWGKENNLKKGTGYTYFQSNSASDYTTNYNSAEQQGYKLLFGIGFSLQDATSAAAKNNPKSNFVIVDSVIKDQKNVTSATFADNESAYLAGVAAAKATKTNKIGFIGGMQSDVITRFEKGYVAGAKSVKSDIKVDIQYAGSFSDAAKGKTIAAAMYGSGDDVVYQCAGGVGTGVFSEAKALNSSKNEADKVWVIGVDQDQEYLGKYKSKDGKDSNFVLVSTIKEVGTVVKDIADKTKDGKFPGGTIVTYNLKNGGVDLGLDNATSEIKDAVAKAKTDIIDGKITVPSK</sequence>
<keyword id="KW-1003">Cell membrane</keyword>
<keyword id="KW-0449">Lipoprotein</keyword>
<keyword id="KW-0472">Membrane</keyword>
<keyword id="KW-0564">Palmitate</keyword>
<keyword id="KW-0732">Signal</keyword>
<gene>
    <name evidence="3" type="primary">bmpA</name>
    <name evidence="6" type="ordered locus">llmg_1064</name>
</gene>
<reference key="1">
    <citation type="journal article" date="2007" name="J. Bacteriol.">
        <title>The complete genome sequence of the lactic acid bacterial paradigm Lactococcus lactis subsp. cremoris MG1363.</title>
        <authorList>
            <person name="Wegmann U."/>
            <person name="O'Connell-Motherway M."/>
            <person name="Zomer A."/>
            <person name="Buist G."/>
            <person name="Shearman C."/>
            <person name="Canchaya C."/>
            <person name="Ventura M."/>
            <person name="Goesmann A."/>
            <person name="Gasson M.J."/>
            <person name="Kuipers O.P."/>
            <person name="van Sinderen D."/>
            <person name="Kok J."/>
        </authorList>
    </citation>
    <scope>NUCLEOTIDE SEQUENCE [LARGE SCALE GENOMIC DNA]</scope>
    <source>
        <strain>MG1363</strain>
    </source>
</reference>
<reference key="2">
    <citation type="journal article" date="2010" name="Microbiology">
        <title>Two nucleoside transporters in Lactococcus lactis with different substrate specificities.</title>
        <authorList>
            <person name="Martinussen J."/>
            <person name="Soerensen C."/>
            <person name="Jendresen C.B."/>
            <person name="Kilstrup M."/>
        </authorList>
    </citation>
    <scope>FUNCTION</scope>
    <scope>SUBUNIT</scope>
    <scope>INDUCTION</scope>
    <scope>DISRUPTION PHENOTYPE</scope>
    <source>
        <strain>MG1363</strain>
    </source>
</reference>
<comment type="function">
    <text evidence="2">Part of an ABC transporter complex involved in the uptake of all common nucleosides.</text>
</comment>
<comment type="subunit">
    <text evidence="5">The complex is composed of two ATP-binding proteins (NupA), two transmembrane proteins (NupB and NupC) and a solute-binding protein (BmpA).</text>
</comment>
<comment type="subcellular location">
    <subcellularLocation>
        <location evidence="1">Cell membrane</location>
        <topology evidence="1">Lipid-anchor</topology>
    </subcellularLocation>
</comment>
<comment type="induction">
    <text evidence="2">Expression is induced in the presence of purine via PurR.</text>
</comment>
<comment type="disruption phenotype">
    <text evidence="2">Mutant is unable to grow on inosine as a sole purine source.</text>
</comment>
<comment type="similarity">
    <text evidence="4">Belongs to the BMP lipoprotein family.</text>
</comment>